<gene>
    <name type="primary">med4</name>
</gene>
<comment type="function">
    <text evidence="1">Component of the Mediator complex, a coactivator involved in the regulated transcription of nearly all RNA polymerase II-dependent genes. Mediator functions as a bridge to convey information from gene-specific regulatory proteins to the basal RNA polymerase II transcription machinery. Mediator is recruited to promoters by direct interactions with regulatory proteins and serves as a scaffold for the assembly of a functional preinitiation complex with RNA polymerase II and the general transcription factors (By similarity).</text>
</comment>
<comment type="subunit">
    <text evidence="1">Component of the Mediator complex.</text>
</comment>
<comment type="subcellular location">
    <subcellularLocation>
        <location evidence="1">Nucleus</location>
    </subcellularLocation>
</comment>
<comment type="similarity">
    <text evidence="4">Belongs to the Mediator complex subunit 4 family.</text>
</comment>
<proteinExistence type="evidence at transcript level"/>
<keyword id="KW-0010">Activator</keyword>
<keyword id="KW-0175">Coiled coil</keyword>
<keyword id="KW-0539">Nucleus</keyword>
<keyword id="KW-1185">Reference proteome</keyword>
<keyword id="KW-0804">Transcription</keyword>
<keyword id="KW-0805">Transcription regulation</keyword>
<sequence>MAVPEKSTKERLMSFLDDLEVLSRELIEMLALSRNQKLSQPGEENQILELLIQKDGEFQELMKVALSQGKIHQEMQVLEKEVEKRDSDIQQLQKQLKEAEHILATAVYQAKEKLKSIDKARKGAISSEELIKYAHRISASNAVCAPLTWVPGDPRRPYPTDLEMRSGLLGQMSNLPTNGVNGHLPGDALAAGRLPDVLAPQYPWQSNDMSMNMLPPNHSNEFLMESLGPNKENEEDVEVMSTDSSSSSSDSD</sequence>
<organism>
    <name type="scientific">Xenopus tropicalis</name>
    <name type="common">Western clawed frog</name>
    <name type="synonym">Silurana tropicalis</name>
    <dbReference type="NCBI Taxonomy" id="8364"/>
    <lineage>
        <taxon>Eukaryota</taxon>
        <taxon>Metazoa</taxon>
        <taxon>Chordata</taxon>
        <taxon>Craniata</taxon>
        <taxon>Vertebrata</taxon>
        <taxon>Euteleostomi</taxon>
        <taxon>Amphibia</taxon>
        <taxon>Batrachia</taxon>
        <taxon>Anura</taxon>
        <taxon>Pipoidea</taxon>
        <taxon>Pipidae</taxon>
        <taxon>Xenopodinae</taxon>
        <taxon>Xenopus</taxon>
        <taxon>Silurana</taxon>
    </lineage>
</organism>
<dbReference type="EMBL" id="BC087778">
    <property type="protein sequence ID" value="AAH87778.1"/>
    <property type="molecule type" value="mRNA"/>
</dbReference>
<dbReference type="RefSeq" id="NP_001011218.1">
    <property type="nucleotide sequence ID" value="NM_001011218.1"/>
</dbReference>
<dbReference type="SMR" id="Q5M8Y7"/>
<dbReference type="FunCoup" id="Q5M8Y7">
    <property type="interactions" value="3802"/>
</dbReference>
<dbReference type="STRING" id="8364.ENSXETP00000041056"/>
<dbReference type="PaxDb" id="8364-ENSXETP00000001186"/>
<dbReference type="DNASU" id="496653"/>
<dbReference type="GeneID" id="496653"/>
<dbReference type="KEGG" id="xtr:496653"/>
<dbReference type="AGR" id="Xenbase:XB-GENE-972352"/>
<dbReference type="CTD" id="29079"/>
<dbReference type="Xenbase" id="XB-GENE-972352">
    <property type="gene designation" value="med4"/>
</dbReference>
<dbReference type="eggNOG" id="KOG4552">
    <property type="taxonomic scope" value="Eukaryota"/>
</dbReference>
<dbReference type="HOGENOM" id="CLU_082233_1_0_1"/>
<dbReference type="InParanoid" id="Q5M8Y7"/>
<dbReference type="OrthoDB" id="1929813at2759"/>
<dbReference type="Proteomes" id="UP000008143">
    <property type="component" value="Chromosome 2"/>
</dbReference>
<dbReference type="GO" id="GO:0016592">
    <property type="term" value="C:mediator complex"/>
    <property type="evidence" value="ECO:0007669"/>
    <property type="project" value="InterPro"/>
</dbReference>
<dbReference type="GO" id="GO:0003712">
    <property type="term" value="F:transcription coregulator activity"/>
    <property type="evidence" value="ECO:0007669"/>
    <property type="project" value="InterPro"/>
</dbReference>
<dbReference type="GO" id="GO:0006357">
    <property type="term" value="P:regulation of transcription by RNA polymerase II"/>
    <property type="evidence" value="ECO:0007669"/>
    <property type="project" value="InterPro"/>
</dbReference>
<dbReference type="InterPro" id="IPR019258">
    <property type="entry name" value="Mediator_Med4"/>
</dbReference>
<dbReference type="PANTHER" id="PTHR13208">
    <property type="entry name" value="MEDIATOR OF RNA POLYMERASE II TRANSCRIPTION SUBUNIT 4"/>
    <property type="match status" value="1"/>
</dbReference>
<dbReference type="PANTHER" id="PTHR13208:SF2">
    <property type="entry name" value="MEDIATOR OF RNA POLYMERASE II TRANSCRIPTION SUBUNIT 4"/>
    <property type="match status" value="1"/>
</dbReference>
<dbReference type="Pfam" id="PF10018">
    <property type="entry name" value="Med4"/>
    <property type="match status" value="1"/>
</dbReference>
<protein>
    <recommendedName>
        <fullName>Mediator of RNA polymerase II transcription subunit 4</fullName>
    </recommendedName>
    <alternativeName>
        <fullName>Mediator complex subunit 4</fullName>
    </alternativeName>
</protein>
<accession>Q5M8Y7</accession>
<reference key="1">
    <citation type="submission" date="2004-12" db="EMBL/GenBank/DDBJ databases">
        <authorList>
            <consortium name="NIH - Xenopus Gene Collection (XGC) project"/>
        </authorList>
    </citation>
    <scope>NUCLEOTIDE SEQUENCE [LARGE SCALE MRNA]</scope>
</reference>
<evidence type="ECO:0000250" key="1"/>
<evidence type="ECO:0000255" key="2"/>
<evidence type="ECO:0000256" key="3">
    <source>
        <dbReference type="SAM" id="MobiDB-lite"/>
    </source>
</evidence>
<evidence type="ECO:0000305" key="4"/>
<feature type="chain" id="PRO_0000302067" description="Mediator of RNA polymerase II transcription subunit 4">
    <location>
        <begin position="1"/>
        <end position="252"/>
    </location>
</feature>
<feature type="region of interest" description="Disordered" evidence="3">
    <location>
        <begin position="218"/>
        <end position="252"/>
    </location>
</feature>
<feature type="coiled-coil region" evidence="2">
    <location>
        <begin position="70"/>
        <end position="112"/>
    </location>
</feature>
<feature type="compositionally biased region" description="Low complexity" evidence="3">
    <location>
        <begin position="241"/>
        <end position="252"/>
    </location>
</feature>
<name>MED4_XENTR</name>